<dbReference type="EC" id="4.2.1.10" evidence="1"/>
<dbReference type="EMBL" id="CR936503">
    <property type="protein sequence ID" value="CAI55190.1"/>
    <property type="molecule type" value="Genomic_DNA"/>
</dbReference>
<dbReference type="RefSeq" id="WP_011374591.1">
    <property type="nucleotide sequence ID" value="NC_007576.1"/>
</dbReference>
<dbReference type="SMR" id="Q38X91"/>
<dbReference type="STRING" id="314315.LCA_0889"/>
<dbReference type="KEGG" id="lsa:LCA_0889"/>
<dbReference type="eggNOG" id="COG0710">
    <property type="taxonomic scope" value="Bacteria"/>
</dbReference>
<dbReference type="HOGENOM" id="CLU_064444_0_0_9"/>
<dbReference type="OrthoDB" id="9813659at2"/>
<dbReference type="UniPathway" id="UPA00053">
    <property type="reaction ID" value="UER00086"/>
</dbReference>
<dbReference type="Proteomes" id="UP000002707">
    <property type="component" value="Chromosome"/>
</dbReference>
<dbReference type="GO" id="GO:0003855">
    <property type="term" value="F:3-dehydroquinate dehydratase activity"/>
    <property type="evidence" value="ECO:0007669"/>
    <property type="project" value="UniProtKB-UniRule"/>
</dbReference>
<dbReference type="GO" id="GO:0046279">
    <property type="term" value="P:3,4-dihydroxybenzoate biosynthetic process"/>
    <property type="evidence" value="ECO:0007669"/>
    <property type="project" value="UniProtKB-ARBA"/>
</dbReference>
<dbReference type="GO" id="GO:0008652">
    <property type="term" value="P:amino acid biosynthetic process"/>
    <property type="evidence" value="ECO:0007669"/>
    <property type="project" value="UniProtKB-KW"/>
</dbReference>
<dbReference type="GO" id="GO:0009073">
    <property type="term" value="P:aromatic amino acid family biosynthetic process"/>
    <property type="evidence" value="ECO:0007669"/>
    <property type="project" value="UniProtKB-KW"/>
</dbReference>
<dbReference type="GO" id="GO:0009423">
    <property type="term" value="P:chorismate biosynthetic process"/>
    <property type="evidence" value="ECO:0007669"/>
    <property type="project" value="UniProtKB-UniRule"/>
</dbReference>
<dbReference type="CDD" id="cd00502">
    <property type="entry name" value="DHQase_I"/>
    <property type="match status" value="1"/>
</dbReference>
<dbReference type="FunFam" id="3.20.20.70:FF:000047">
    <property type="entry name" value="3-dehydroquinate dehydratase"/>
    <property type="match status" value="1"/>
</dbReference>
<dbReference type="Gene3D" id="3.20.20.70">
    <property type="entry name" value="Aldolase class I"/>
    <property type="match status" value="1"/>
</dbReference>
<dbReference type="HAMAP" id="MF_00214">
    <property type="entry name" value="AroD"/>
    <property type="match status" value="1"/>
</dbReference>
<dbReference type="InterPro" id="IPR013785">
    <property type="entry name" value="Aldolase_TIM"/>
</dbReference>
<dbReference type="InterPro" id="IPR001381">
    <property type="entry name" value="DHquinase_I"/>
</dbReference>
<dbReference type="InterPro" id="IPR050146">
    <property type="entry name" value="Type-I_3-dehydroquinase"/>
</dbReference>
<dbReference type="NCBIfam" id="TIGR01093">
    <property type="entry name" value="aroD"/>
    <property type="match status" value="1"/>
</dbReference>
<dbReference type="PANTHER" id="PTHR43699">
    <property type="entry name" value="3-DEHYDROQUINATE DEHYDRATASE"/>
    <property type="match status" value="1"/>
</dbReference>
<dbReference type="PANTHER" id="PTHR43699:SF1">
    <property type="entry name" value="3-DEHYDROQUINATE DEHYDRATASE"/>
    <property type="match status" value="1"/>
</dbReference>
<dbReference type="Pfam" id="PF01487">
    <property type="entry name" value="DHquinase_I"/>
    <property type="match status" value="1"/>
</dbReference>
<dbReference type="SUPFAM" id="SSF51569">
    <property type="entry name" value="Aldolase"/>
    <property type="match status" value="1"/>
</dbReference>
<comment type="function">
    <text evidence="1">Involved in the third step of the chorismate pathway, which leads to the biosynthesis of aromatic amino acids. Catalyzes the cis-dehydration of 3-dehydroquinate (DHQ) and introduces the first double bond of the aromatic ring to yield 3-dehydroshikimate.</text>
</comment>
<comment type="catalytic activity">
    <reaction evidence="1">
        <text>3-dehydroquinate = 3-dehydroshikimate + H2O</text>
        <dbReference type="Rhea" id="RHEA:21096"/>
        <dbReference type="ChEBI" id="CHEBI:15377"/>
        <dbReference type="ChEBI" id="CHEBI:16630"/>
        <dbReference type="ChEBI" id="CHEBI:32364"/>
        <dbReference type="EC" id="4.2.1.10"/>
    </reaction>
</comment>
<comment type="pathway">
    <text evidence="1">Metabolic intermediate biosynthesis; chorismate biosynthesis; chorismate from D-erythrose 4-phosphate and phosphoenolpyruvate: step 3/7.</text>
</comment>
<comment type="subunit">
    <text evidence="1">Homodimer.</text>
</comment>
<comment type="similarity">
    <text evidence="1">Belongs to the type-I 3-dehydroquinase family.</text>
</comment>
<reference key="1">
    <citation type="journal article" date="2005" name="Nat. Biotechnol.">
        <title>The complete genome sequence of the meat-borne lactic acid bacterium Lactobacillus sakei 23K.</title>
        <authorList>
            <person name="Chaillou S."/>
            <person name="Champomier-Verges M.-C."/>
            <person name="Cornet M."/>
            <person name="Crutz-Le Coq A.-M."/>
            <person name="Dudez A.-M."/>
            <person name="Martin V."/>
            <person name="Beaufils S."/>
            <person name="Darbon-Rongere E."/>
            <person name="Bossy R."/>
            <person name="Loux V."/>
            <person name="Zagorec M."/>
        </authorList>
    </citation>
    <scope>NUCLEOTIDE SEQUENCE [LARGE SCALE GENOMIC DNA]</scope>
    <source>
        <strain>23K</strain>
    </source>
</reference>
<proteinExistence type="inferred from homology"/>
<feature type="chain" id="PRO_0000325527" description="3-dehydroquinate dehydratase">
    <location>
        <begin position="1"/>
        <end position="240"/>
    </location>
</feature>
<feature type="active site" description="Proton donor/acceptor" evidence="1">
    <location>
        <position position="132"/>
    </location>
</feature>
<feature type="active site" description="Schiff-base intermediate with substrate" evidence="1">
    <location>
        <position position="160"/>
    </location>
</feature>
<feature type="binding site" evidence="1">
    <location>
        <position position="15"/>
    </location>
    <ligand>
        <name>3-dehydroquinate</name>
        <dbReference type="ChEBI" id="CHEBI:32364"/>
    </ligand>
</feature>
<feature type="binding site" evidence="1">
    <location>
        <begin position="42"/>
        <end position="44"/>
    </location>
    <ligand>
        <name>3-dehydroquinate</name>
        <dbReference type="ChEBI" id="CHEBI:32364"/>
    </ligand>
</feature>
<feature type="binding site" evidence="1">
    <location>
        <position position="73"/>
    </location>
    <ligand>
        <name>3-dehydroquinate</name>
        <dbReference type="ChEBI" id="CHEBI:32364"/>
    </ligand>
</feature>
<feature type="binding site" evidence="1">
    <location>
        <position position="202"/>
    </location>
    <ligand>
        <name>3-dehydroquinate</name>
        <dbReference type="ChEBI" id="CHEBI:32364"/>
    </ligand>
</feature>
<feature type="binding site" evidence="1">
    <location>
        <position position="221"/>
    </location>
    <ligand>
        <name>3-dehydroquinate</name>
        <dbReference type="ChEBI" id="CHEBI:32364"/>
    </ligand>
</feature>
<feature type="binding site" evidence="1">
    <location>
        <position position="225"/>
    </location>
    <ligand>
        <name>3-dehydroquinate</name>
        <dbReference type="ChEBI" id="CHEBI:32364"/>
    </ligand>
</feature>
<protein>
    <recommendedName>
        <fullName evidence="1">3-dehydroquinate dehydratase</fullName>
        <shortName evidence="1">3-dehydroquinase</shortName>
        <ecNumber evidence="1">4.2.1.10</ecNumber>
    </recommendedName>
    <alternativeName>
        <fullName evidence="1">Type I DHQase</fullName>
    </alternativeName>
    <alternativeName>
        <fullName evidence="1">Type I dehydroquinase</fullName>
        <shortName evidence="1">DHQ1</shortName>
    </alternativeName>
</protein>
<sequence length="240" mass="26502">MHLEFTTGQTQTAVSLMPRHLDDCLRELILINQKKDAIDILEWRLDYWQAPAQLLTAAEKIAALDLPLILTVRTTNDGGLASAQDYLTYYAPLIKAHIGQAIDLEWSLAAEQRHQLAELAHQQHYQVLLSHHDTVQTPDNDTLRTQLLAMQADPDADLLKLATTAQSPADTTRLLAATQSFTHQFDKPLTTMAMSEFGVASRIFGGQFGSAISFGYLETPSAPGQLPIEQLKGLLTTNQA</sequence>
<accession>Q38X91</accession>
<gene>
    <name evidence="1" type="primary">aroD</name>
    <name type="ordered locus">LCA_0889</name>
</gene>
<name>AROD_LATSS</name>
<evidence type="ECO:0000255" key="1">
    <source>
        <dbReference type="HAMAP-Rule" id="MF_00214"/>
    </source>
</evidence>
<keyword id="KW-0028">Amino-acid biosynthesis</keyword>
<keyword id="KW-0057">Aromatic amino acid biosynthesis</keyword>
<keyword id="KW-0456">Lyase</keyword>
<keyword id="KW-1185">Reference proteome</keyword>
<keyword id="KW-0704">Schiff base</keyword>
<organism>
    <name type="scientific">Latilactobacillus sakei subsp. sakei (strain 23K)</name>
    <name type="common">Lactobacillus sakei subsp. sakei</name>
    <dbReference type="NCBI Taxonomy" id="314315"/>
    <lineage>
        <taxon>Bacteria</taxon>
        <taxon>Bacillati</taxon>
        <taxon>Bacillota</taxon>
        <taxon>Bacilli</taxon>
        <taxon>Lactobacillales</taxon>
        <taxon>Lactobacillaceae</taxon>
        <taxon>Latilactobacillus</taxon>
    </lineage>
</organism>